<protein>
    <recommendedName>
        <fullName evidence="3">Toxin PhcrTx2</fullName>
    </recommendedName>
</protein>
<keyword id="KW-0903">Direct protein sequencing</keyword>
<keyword id="KW-1015">Disulfide bond</keyword>
<keyword id="KW-0872">Ion channel impairing toxin</keyword>
<keyword id="KW-0166">Nematocyst</keyword>
<keyword id="KW-0528">Neurotoxin</keyword>
<keyword id="KW-0632">Potassium channel impairing toxin</keyword>
<keyword id="KW-0964">Secreted</keyword>
<keyword id="KW-0800">Toxin</keyword>
<keyword id="KW-1220">Voltage-gated potassium channel impairing toxin</keyword>
<keyword id="KW-0738">Voltage-gated sodium channel impairing toxin</keyword>
<name>BDS2_PHYCF</name>
<feature type="chain" id="PRO_0000443732" description="Toxin PhcrTx2" evidence="2">
    <location>
        <begin position="1"/>
        <end position="46"/>
    </location>
</feature>
<feature type="disulfide bond" evidence="1">
    <location>
        <begin position="4"/>
        <end position="40"/>
    </location>
</feature>
<feature type="disulfide bond" evidence="1">
    <location>
        <begin position="6"/>
        <end position="32"/>
    </location>
</feature>
<feature type="disulfide bond" evidence="1">
    <location>
        <begin position="22"/>
        <end position="41"/>
    </location>
</feature>
<sequence>ALPCRCEGKTEYGDKWIFHGGCPNDYGYNDRCFMKPGSVCCYPKYE</sequence>
<evidence type="ECO:0000250" key="1">
    <source>
        <dbReference type="UniProtKB" id="P11494"/>
    </source>
</evidence>
<evidence type="ECO:0000269" key="2">
    <source>
    </source>
</evidence>
<evidence type="ECO:0000303" key="3">
    <source>
    </source>
</evidence>
<evidence type="ECO:0000305" key="4"/>
<evidence type="ECO:0000305" key="5">
    <source>
    </source>
</evidence>
<organism evidence="3">
    <name type="scientific">Phymanthus crucifer</name>
    <name type="common">Red beaded anemone</name>
    <dbReference type="NCBI Taxonomy" id="1291152"/>
    <lineage>
        <taxon>Eukaryota</taxon>
        <taxon>Metazoa</taxon>
        <taxon>Cnidaria</taxon>
        <taxon>Anthozoa</taxon>
        <taxon>Hexacorallia</taxon>
        <taxon>Actiniaria</taxon>
        <taxon>Phymanthidae</taxon>
        <taxon>Phymanthus</taxon>
    </lineage>
</organism>
<dbReference type="SMR" id="C0HK75"/>
<dbReference type="GO" id="GO:0005576">
    <property type="term" value="C:extracellular region"/>
    <property type="evidence" value="ECO:0007669"/>
    <property type="project" value="UniProtKB-SubCell"/>
</dbReference>
<dbReference type="GO" id="GO:0042151">
    <property type="term" value="C:nematocyst"/>
    <property type="evidence" value="ECO:0007669"/>
    <property type="project" value="UniProtKB-SubCell"/>
</dbReference>
<dbReference type="GO" id="GO:0008200">
    <property type="term" value="F:ion channel inhibitor activity"/>
    <property type="evidence" value="ECO:0007669"/>
    <property type="project" value="InterPro"/>
</dbReference>
<dbReference type="GO" id="GO:0015459">
    <property type="term" value="F:potassium channel regulator activity"/>
    <property type="evidence" value="ECO:0007669"/>
    <property type="project" value="UniProtKB-KW"/>
</dbReference>
<dbReference type="GO" id="GO:0017080">
    <property type="term" value="F:sodium channel regulator activity"/>
    <property type="evidence" value="ECO:0007669"/>
    <property type="project" value="UniProtKB-KW"/>
</dbReference>
<dbReference type="GO" id="GO:0090729">
    <property type="term" value="F:toxin activity"/>
    <property type="evidence" value="ECO:0007669"/>
    <property type="project" value="UniProtKB-KW"/>
</dbReference>
<dbReference type="Gene3D" id="2.20.20.10">
    <property type="entry name" value="Anthopleurin-A"/>
    <property type="match status" value="1"/>
</dbReference>
<dbReference type="InterPro" id="IPR012414">
    <property type="entry name" value="BDS_K_chnl_tox"/>
</dbReference>
<dbReference type="InterPro" id="IPR023355">
    <property type="entry name" value="Myo_ane_neurotoxin_sf"/>
</dbReference>
<dbReference type="Pfam" id="PF07936">
    <property type="entry name" value="Defensin_4"/>
    <property type="match status" value="1"/>
</dbReference>
<dbReference type="SUPFAM" id="SSF57392">
    <property type="entry name" value="Defensin-like"/>
    <property type="match status" value="1"/>
</dbReference>
<reference evidence="4" key="1">
    <citation type="journal article" date="2018" name="Toxins">
        <title>PhcrTx2, a New Crab-Paralyzing Peptide Toxin from the Sea Anemone Phymanthus crucifer.</title>
        <authorList>
            <person name="Rodriguez A.A."/>
            <person name="Garateix A."/>
            <person name="Salceda E."/>
            <person name="Peigneur S."/>
            <person name="Zaharenko A.J."/>
            <person name="Pons T."/>
            <person name="Santos Y."/>
            <person name="Arreguin R."/>
            <person name="Staendker L."/>
            <person name="Forssmann W.G."/>
            <person name="Tytgat J."/>
            <person name="Vega R."/>
            <person name="Soto E."/>
        </authorList>
    </citation>
    <scope>PROTEIN SEQUENCE</scope>
    <scope>FUNCTION</scope>
    <scope>MASS SPECTROMETRY</scope>
    <scope>TOXIC DOSE</scope>
</reference>
<comment type="function">
    <text evidence="2">Neurotoxin that induces paralysis (but not death) to U.thayeri crabs. Partially and reversibly inhibits glutamate-evoked peak currents (IC(50)=4.7 uM) but not voltage-gated potassium channel currents in cultured isolated neurons from the land snail H.aspersa. Weakly inhibits voltage-gated potassium peak currents (IC(50)=6.4 uM) and steady-state currents (IC(50)=8.2 uM) in rat dorsal root ganglion (DRG) neurons. Weakly inhibits voltage-gated sodium currents in rat DRG neurons (IC(50)=0.9 uM).</text>
</comment>
<comment type="subcellular location">
    <subcellularLocation>
        <location evidence="5">Secreted</location>
    </subcellularLocation>
    <subcellularLocation>
        <location evidence="5">Nematocyst</location>
    </subcellularLocation>
</comment>
<comment type="mass spectrometry"/>
<comment type="toxic dose">
    <text evidence="2">PD(50) is 707 ug/kg in U.thayeri crabs.</text>
</comment>
<comment type="miscellaneous">
    <text evidence="2">Negative results: has no inhibitory effect on voltage-gated ion channels Kv1.1/KCNA1, Kv1.2/KCNA2, Kv1.3/KCNA3, Kv1.4/KCNA4, Kv1.6/KCNA6, Kv2.1/KCNB1, Kv3.1/KCNC1, Kv4.2/KCND2, Kv10.1/KCNH1/EAG1, Shaker IR (with the inactivation domain removed), Nav1.4/SCN4A, Nav1.5/SCN5A, Nav1.6/SCN8A or D.melanogaster Nav1/para.</text>
</comment>
<comment type="similarity">
    <text evidence="4">Belongs to the sea anemone type 3 (BDS) potassium channel toxin family.</text>
</comment>
<accession>C0HK75</accession>
<proteinExistence type="evidence at protein level"/>